<name>Y353_STAES</name>
<comment type="subcellular location">
    <subcellularLocation>
        <location evidence="2">Cell membrane</location>
        <topology evidence="2">Multi-pass membrane protein</topology>
    </subcellularLocation>
</comment>
<comment type="similarity">
    <text evidence="2">Belongs to the UPF0382 family.</text>
</comment>
<gene>
    <name type="ordered locus">SE_0353</name>
</gene>
<reference key="1">
    <citation type="journal article" date="2003" name="Mol. Microbiol.">
        <title>Genome-based analysis of virulence genes in a non-biofilm-forming Staphylococcus epidermidis strain (ATCC 12228).</title>
        <authorList>
            <person name="Zhang Y.-Q."/>
            <person name="Ren S.-X."/>
            <person name="Li H.-L."/>
            <person name="Wang Y.-X."/>
            <person name="Fu G."/>
            <person name="Yang J."/>
            <person name="Qin Z.-Q."/>
            <person name="Miao Y.-G."/>
            <person name="Wang W.-Y."/>
            <person name="Chen R.-S."/>
            <person name="Shen Y."/>
            <person name="Chen Z."/>
            <person name="Yuan Z.-H."/>
            <person name="Zhao G.-P."/>
            <person name="Qu D."/>
            <person name="Danchin A."/>
            <person name="Wen Y.-M."/>
        </authorList>
    </citation>
    <scope>NUCLEOTIDE SEQUENCE [LARGE SCALE GENOMIC DNA]</scope>
    <source>
        <strain>ATCC 12228 / FDA PCI 1200</strain>
    </source>
</reference>
<accession>Q8CTQ5</accession>
<evidence type="ECO:0000255" key="1"/>
<evidence type="ECO:0000305" key="2"/>
<proteinExistence type="inferred from homology"/>
<feature type="chain" id="PRO_0000249038" description="UPF0382 membrane protein SE_0353">
    <location>
        <begin position="1"/>
        <end position="122"/>
    </location>
</feature>
<feature type="transmembrane region" description="Helical" evidence="1">
    <location>
        <begin position="3"/>
        <end position="23"/>
    </location>
</feature>
<feature type="transmembrane region" description="Helical" evidence="1">
    <location>
        <begin position="46"/>
        <end position="66"/>
    </location>
</feature>
<feature type="transmembrane region" description="Helical" evidence="1">
    <location>
        <begin position="69"/>
        <end position="89"/>
    </location>
</feature>
<feature type="transmembrane region" description="Helical" evidence="1">
    <location>
        <begin position="98"/>
        <end position="118"/>
    </location>
</feature>
<organism>
    <name type="scientific">Staphylococcus epidermidis (strain ATCC 12228 / FDA PCI 1200)</name>
    <dbReference type="NCBI Taxonomy" id="176280"/>
    <lineage>
        <taxon>Bacteria</taxon>
        <taxon>Bacillati</taxon>
        <taxon>Bacillota</taxon>
        <taxon>Bacilli</taxon>
        <taxon>Bacillales</taxon>
        <taxon>Staphylococcaceae</taxon>
        <taxon>Staphylococcus</taxon>
    </lineage>
</organism>
<dbReference type="EMBL" id="AE015929">
    <property type="protein sequence ID" value="AAO03950.1"/>
    <property type="molecule type" value="Genomic_DNA"/>
</dbReference>
<dbReference type="RefSeq" id="NP_763908.1">
    <property type="nucleotide sequence ID" value="NC_004461.1"/>
</dbReference>
<dbReference type="RefSeq" id="WP_002494334.1">
    <property type="nucleotide sequence ID" value="NZ_WBME01000045.1"/>
</dbReference>
<dbReference type="DNASU" id="1056775"/>
<dbReference type="KEGG" id="sep:SE_0353"/>
<dbReference type="PATRIC" id="fig|176280.10.peg.327"/>
<dbReference type="eggNOG" id="COG2363">
    <property type="taxonomic scope" value="Bacteria"/>
</dbReference>
<dbReference type="HOGENOM" id="CLU_096548_3_3_9"/>
<dbReference type="OrthoDB" id="9802121at2"/>
<dbReference type="Proteomes" id="UP000001411">
    <property type="component" value="Chromosome"/>
</dbReference>
<dbReference type="GO" id="GO:0005886">
    <property type="term" value="C:plasma membrane"/>
    <property type="evidence" value="ECO:0007669"/>
    <property type="project" value="UniProtKB-SubCell"/>
</dbReference>
<dbReference type="InterPro" id="IPR006696">
    <property type="entry name" value="DUF423"/>
</dbReference>
<dbReference type="PANTHER" id="PTHR43461">
    <property type="entry name" value="TRANSMEMBRANE PROTEIN 256"/>
    <property type="match status" value="1"/>
</dbReference>
<dbReference type="PANTHER" id="PTHR43461:SF1">
    <property type="entry name" value="TRANSMEMBRANE PROTEIN 256"/>
    <property type="match status" value="1"/>
</dbReference>
<dbReference type="Pfam" id="PF04241">
    <property type="entry name" value="DUF423"/>
    <property type="match status" value="1"/>
</dbReference>
<protein>
    <recommendedName>
        <fullName>UPF0382 membrane protein SE_0353</fullName>
    </recommendedName>
</protein>
<keyword id="KW-1003">Cell membrane</keyword>
<keyword id="KW-0472">Membrane</keyword>
<keyword id="KW-0812">Transmembrane</keyword>
<keyword id="KW-1133">Transmembrane helix</keyword>
<sequence length="122" mass="13135">MKVFIILGALNAMMAVGTGAFGAHGLEDKLSDKYMSIWEKATTYQMYHGLGLLVIGLISGTTSINVNWAGWLLFFGIVFFSGSLYFLALTQVRILGAITPIGGVLFIIGWLVLVIATLKFAG</sequence>